<accession>B2IEP2</accession>
<dbReference type="EMBL" id="CP001016">
    <property type="protein sequence ID" value="ACB96982.1"/>
    <property type="molecule type" value="Genomic_DNA"/>
</dbReference>
<dbReference type="RefSeq" id="WP_012386330.1">
    <property type="nucleotide sequence ID" value="NC_010581.1"/>
</dbReference>
<dbReference type="SMR" id="B2IEP2"/>
<dbReference type="STRING" id="395963.Bind_3425"/>
<dbReference type="KEGG" id="bid:Bind_3425"/>
<dbReference type="eggNOG" id="COG0227">
    <property type="taxonomic scope" value="Bacteria"/>
</dbReference>
<dbReference type="HOGENOM" id="CLU_064548_4_2_5"/>
<dbReference type="OrthoDB" id="9805609at2"/>
<dbReference type="Proteomes" id="UP000001695">
    <property type="component" value="Chromosome"/>
</dbReference>
<dbReference type="GO" id="GO:0022625">
    <property type="term" value="C:cytosolic large ribosomal subunit"/>
    <property type="evidence" value="ECO:0007669"/>
    <property type="project" value="TreeGrafter"/>
</dbReference>
<dbReference type="GO" id="GO:0003735">
    <property type="term" value="F:structural constituent of ribosome"/>
    <property type="evidence" value="ECO:0007669"/>
    <property type="project" value="InterPro"/>
</dbReference>
<dbReference type="GO" id="GO:0006412">
    <property type="term" value="P:translation"/>
    <property type="evidence" value="ECO:0007669"/>
    <property type="project" value="UniProtKB-UniRule"/>
</dbReference>
<dbReference type="Gene3D" id="2.30.170.40">
    <property type="entry name" value="Ribosomal protein L28/L24"/>
    <property type="match status" value="1"/>
</dbReference>
<dbReference type="HAMAP" id="MF_00373">
    <property type="entry name" value="Ribosomal_bL28"/>
    <property type="match status" value="1"/>
</dbReference>
<dbReference type="InterPro" id="IPR026569">
    <property type="entry name" value="Ribosomal_bL28"/>
</dbReference>
<dbReference type="InterPro" id="IPR034704">
    <property type="entry name" value="Ribosomal_bL28/bL31-like_sf"/>
</dbReference>
<dbReference type="InterPro" id="IPR001383">
    <property type="entry name" value="Ribosomal_bL28_bact-type"/>
</dbReference>
<dbReference type="InterPro" id="IPR037147">
    <property type="entry name" value="Ribosomal_bL28_sf"/>
</dbReference>
<dbReference type="NCBIfam" id="TIGR00009">
    <property type="entry name" value="L28"/>
    <property type="match status" value="1"/>
</dbReference>
<dbReference type="PANTHER" id="PTHR13528">
    <property type="entry name" value="39S RIBOSOMAL PROTEIN L28, MITOCHONDRIAL"/>
    <property type="match status" value="1"/>
</dbReference>
<dbReference type="PANTHER" id="PTHR13528:SF2">
    <property type="entry name" value="LARGE RIBOSOMAL SUBUNIT PROTEIN BL28M"/>
    <property type="match status" value="1"/>
</dbReference>
<dbReference type="Pfam" id="PF00830">
    <property type="entry name" value="Ribosomal_L28"/>
    <property type="match status" value="1"/>
</dbReference>
<dbReference type="SUPFAM" id="SSF143800">
    <property type="entry name" value="L28p-like"/>
    <property type="match status" value="1"/>
</dbReference>
<keyword id="KW-1185">Reference proteome</keyword>
<keyword id="KW-0687">Ribonucleoprotein</keyword>
<keyword id="KW-0689">Ribosomal protein</keyword>
<evidence type="ECO:0000255" key="1">
    <source>
        <dbReference type="HAMAP-Rule" id="MF_00373"/>
    </source>
</evidence>
<evidence type="ECO:0000305" key="2"/>
<gene>
    <name evidence="1" type="primary">rpmB</name>
    <name type="ordered locus">Bind_3425</name>
</gene>
<reference key="1">
    <citation type="journal article" date="2010" name="J. Bacteriol.">
        <title>Complete genome sequence of Beijerinckia indica subsp. indica.</title>
        <authorList>
            <person name="Tamas I."/>
            <person name="Dedysh S.N."/>
            <person name="Liesack W."/>
            <person name="Stott M.B."/>
            <person name="Alam M."/>
            <person name="Murrell J.C."/>
            <person name="Dunfield P.F."/>
        </authorList>
    </citation>
    <scope>NUCLEOTIDE SEQUENCE [LARGE SCALE GENOMIC DNA]</scope>
    <source>
        <strain>ATCC 9039 / DSM 1715 / NCIMB 8712</strain>
    </source>
</reference>
<proteinExistence type="inferred from homology"/>
<feature type="chain" id="PRO_1000121586" description="Large ribosomal subunit protein bL28">
    <location>
        <begin position="1"/>
        <end position="98"/>
    </location>
</feature>
<sequence>MSRRCELTGKAVLTGNLVSHSNRKTRTRFLPNLCNVTLISDTLQRRIHFRVAAATLRSVEHRGGLDAFLVKAADAQLSPGALSVKREIVKKQAAAAAQ</sequence>
<comment type="similarity">
    <text evidence="1">Belongs to the bacterial ribosomal protein bL28 family.</text>
</comment>
<name>RL28_BEII9</name>
<organism>
    <name type="scientific">Beijerinckia indica subsp. indica (strain ATCC 9039 / DSM 1715 / NCIMB 8712)</name>
    <dbReference type="NCBI Taxonomy" id="395963"/>
    <lineage>
        <taxon>Bacteria</taxon>
        <taxon>Pseudomonadati</taxon>
        <taxon>Pseudomonadota</taxon>
        <taxon>Alphaproteobacteria</taxon>
        <taxon>Hyphomicrobiales</taxon>
        <taxon>Beijerinckiaceae</taxon>
        <taxon>Beijerinckia</taxon>
    </lineage>
</organism>
<protein>
    <recommendedName>
        <fullName evidence="1">Large ribosomal subunit protein bL28</fullName>
    </recommendedName>
    <alternativeName>
        <fullName evidence="2">50S ribosomal protein L28</fullName>
    </alternativeName>
</protein>